<evidence type="ECO:0000255" key="1">
    <source>
        <dbReference type="HAMAP-Rule" id="MF_00087"/>
    </source>
</evidence>
<comment type="function">
    <text evidence="1">Catalyzes the NADPH-dependent reduction of glutamyl-tRNA(Glu) to glutamate 1-semialdehyde (GSA).</text>
</comment>
<comment type="catalytic activity">
    <reaction evidence="1">
        <text>(S)-4-amino-5-oxopentanoate + tRNA(Glu) + NADP(+) = L-glutamyl-tRNA(Glu) + NADPH + H(+)</text>
        <dbReference type="Rhea" id="RHEA:12344"/>
        <dbReference type="Rhea" id="RHEA-COMP:9663"/>
        <dbReference type="Rhea" id="RHEA-COMP:9680"/>
        <dbReference type="ChEBI" id="CHEBI:15378"/>
        <dbReference type="ChEBI" id="CHEBI:57501"/>
        <dbReference type="ChEBI" id="CHEBI:57783"/>
        <dbReference type="ChEBI" id="CHEBI:58349"/>
        <dbReference type="ChEBI" id="CHEBI:78442"/>
        <dbReference type="ChEBI" id="CHEBI:78520"/>
        <dbReference type="EC" id="1.2.1.70"/>
    </reaction>
</comment>
<comment type="pathway">
    <text evidence="1">Porphyrin-containing compound metabolism; protoporphyrin-IX biosynthesis; 5-aminolevulinate from L-glutamyl-tRNA(Glu): step 1/2.</text>
</comment>
<comment type="subunit">
    <text evidence="1">Homodimer.</text>
</comment>
<comment type="domain">
    <text evidence="1">Possesses an unusual extended V-shaped dimeric structure with each monomer consisting of three distinct domains arranged along a curved 'spinal' alpha-helix. The N-terminal catalytic domain specifically recognizes the glutamate moiety of the substrate. The second domain is the NADPH-binding domain, and the third C-terminal domain is responsible for dimerization.</text>
</comment>
<comment type="miscellaneous">
    <text evidence="1">During catalysis, the active site Cys acts as a nucleophile attacking the alpha-carbonyl group of tRNA-bound glutamate with the formation of a thioester intermediate between enzyme and glutamate, and the concomitant release of tRNA(Glu). The thioester intermediate is finally reduced by direct hydride transfer from NADPH, to form the product GSA.</text>
</comment>
<comment type="similarity">
    <text evidence="1">Belongs to the glutamyl-tRNA reductase family.</text>
</comment>
<reference key="1">
    <citation type="journal article" date="2006" name="J. Bacteriol.">
        <title>Whole-genome sequence of Listeria welshimeri reveals common steps in genome reduction with Listeria innocua as compared to Listeria monocytogenes.</title>
        <authorList>
            <person name="Hain T."/>
            <person name="Steinweg C."/>
            <person name="Kuenne C.T."/>
            <person name="Billion A."/>
            <person name="Ghai R."/>
            <person name="Chatterjee S.S."/>
            <person name="Domann E."/>
            <person name="Kaerst U."/>
            <person name="Goesmann A."/>
            <person name="Bekel T."/>
            <person name="Bartels D."/>
            <person name="Kaiser O."/>
            <person name="Meyer F."/>
            <person name="Puehler A."/>
            <person name="Weisshaar B."/>
            <person name="Wehland J."/>
            <person name="Liang C."/>
            <person name="Dandekar T."/>
            <person name="Lampidis R."/>
            <person name="Kreft J."/>
            <person name="Goebel W."/>
            <person name="Chakraborty T."/>
        </authorList>
    </citation>
    <scope>NUCLEOTIDE SEQUENCE [LARGE SCALE GENOMIC DNA]</scope>
    <source>
        <strain>ATCC 35897 / DSM 20650 / CCUG 15529 / CIP 8149 / NCTC 11857 / SLCC 5334 / V8</strain>
    </source>
</reference>
<dbReference type="EC" id="1.2.1.70" evidence="1"/>
<dbReference type="EMBL" id="AM263198">
    <property type="protein sequence ID" value="CAK20988.1"/>
    <property type="molecule type" value="Genomic_DNA"/>
</dbReference>
<dbReference type="RefSeq" id="WP_011702356.1">
    <property type="nucleotide sequence ID" value="NC_008555.1"/>
</dbReference>
<dbReference type="SMR" id="A0AJ06"/>
<dbReference type="STRING" id="386043.lwe1570"/>
<dbReference type="GeneID" id="61189447"/>
<dbReference type="KEGG" id="lwe:lwe1570"/>
<dbReference type="eggNOG" id="COG0373">
    <property type="taxonomic scope" value="Bacteria"/>
</dbReference>
<dbReference type="HOGENOM" id="CLU_035113_2_2_9"/>
<dbReference type="OrthoDB" id="110209at2"/>
<dbReference type="UniPathway" id="UPA00251">
    <property type="reaction ID" value="UER00316"/>
</dbReference>
<dbReference type="Proteomes" id="UP000000779">
    <property type="component" value="Chromosome"/>
</dbReference>
<dbReference type="GO" id="GO:0008883">
    <property type="term" value="F:glutamyl-tRNA reductase activity"/>
    <property type="evidence" value="ECO:0007669"/>
    <property type="project" value="UniProtKB-UniRule"/>
</dbReference>
<dbReference type="GO" id="GO:0050661">
    <property type="term" value="F:NADP binding"/>
    <property type="evidence" value="ECO:0007669"/>
    <property type="project" value="InterPro"/>
</dbReference>
<dbReference type="GO" id="GO:0006782">
    <property type="term" value="P:protoporphyrinogen IX biosynthetic process"/>
    <property type="evidence" value="ECO:0007669"/>
    <property type="project" value="UniProtKB-UniRule"/>
</dbReference>
<dbReference type="CDD" id="cd05213">
    <property type="entry name" value="NAD_bind_Glutamyl_tRNA_reduct"/>
    <property type="match status" value="1"/>
</dbReference>
<dbReference type="FunFam" id="3.30.460.30:FF:000001">
    <property type="entry name" value="Glutamyl-tRNA reductase"/>
    <property type="match status" value="1"/>
</dbReference>
<dbReference type="FunFam" id="3.40.50.720:FF:000031">
    <property type="entry name" value="Glutamyl-tRNA reductase"/>
    <property type="match status" value="1"/>
</dbReference>
<dbReference type="Gene3D" id="3.30.460.30">
    <property type="entry name" value="Glutamyl-tRNA reductase, N-terminal domain"/>
    <property type="match status" value="1"/>
</dbReference>
<dbReference type="Gene3D" id="3.40.50.720">
    <property type="entry name" value="NAD(P)-binding Rossmann-like Domain"/>
    <property type="match status" value="1"/>
</dbReference>
<dbReference type="HAMAP" id="MF_00087">
    <property type="entry name" value="Glu_tRNA_reductase"/>
    <property type="match status" value="1"/>
</dbReference>
<dbReference type="InterPro" id="IPR000343">
    <property type="entry name" value="4pyrrol_synth_GluRdtase"/>
</dbReference>
<dbReference type="InterPro" id="IPR015896">
    <property type="entry name" value="4pyrrol_synth_GluRdtase_dimer"/>
</dbReference>
<dbReference type="InterPro" id="IPR015895">
    <property type="entry name" value="4pyrrol_synth_GluRdtase_N"/>
</dbReference>
<dbReference type="InterPro" id="IPR018214">
    <property type="entry name" value="GluRdtase_CS"/>
</dbReference>
<dbReference type="InterPro" id="IPR036453">
    <property type="entry name" value="GluRdtase_dimer_dom_sf"/>
</dbReference>
<dbReference type="InterPro" id="IPR036343">
    <property type="entry name" value="GluRdtase_N_sf"/>
</dbReference>
<dbReference type="InterPro" id="IPR036291">
    <property type="entry name" value="NAD(P)-bd_dom_sf"/>
</dbReference>
<dbReference type="InterPro" id="IPR006151">
    <property type="entry name" value="Shikm_DH/Glu-tRNA_Rdtase"/>
</dbReference>
<dbReference type="NCBIfam" id="TIGR01035">
    <property type="entry name" value="hemA"/>
    <property type="match status" value="1"/>
</dbReference>
<dbReference type="PANTHER" id="PTHR43120">
    <property type="entry name" value="GLUTAMYL-TRNA REDUCTASE 1, CHLOROPLASTIC"/>
    <property type="match status" value="1"/>
</dbReference>
<dbReference type="PANTHER" id="PTHR43120:SF1">
    <property type="entry name" value="GLUTAMYL-TRNA REDUCTASE 1, CHLOROPLASTIC"/>
    <property type="match status" value="1"/>
</dbReference>
<dbReference type="Pfam" id="PF00745">
    <property type="entry name" value="GlutR_dimer"/>
    <property type="match status" value="1"/>
</dbReference>
<dbReference type="Pfam" id="PF05201">
    <property type="entry name" value="GlutR_N"/>
    <property type="match status" value="1"/>
</dbReference>
<dbReference type="Pfam" id="PF01488">
    <property type="entry name" value="Shikimate_DH"/>
    <property type="match status" value="1"/>
</dbReference>
<dbReference type="PIRSF" id="PIRSF000445">
    <property type="entry name" value="4pyrrol_synth_GluRdtase"/>
    <property type="match status" value="1"/>
</dbReference>
<dbReference type="SUPFAM" id="SSF69742">
    <property type="entry name" value="Glutamyl tRNA-reductase catalytic, N-terminal domain"/>
    <property type="match status" value="1"/>
</dbReference>
<dbReference type="SUPFAM" id="SSF69075">
    <property type="entry name" value="Glutamyl tRNA-reductase dimerization domain"/>
    <property type="match status" value="1"/>
</dbReference>
<dbReference type="SUPFAM" id="SSF51735">
    <property type="entry name" value="NAD(P)-binding Rossmann-fold domains"/>
    <property type="match status" value="1"/>
</dbReference>
<dbReference type="PROSITE" id="PS00747">
    <property type="entry name" value="GLUTR"/>
    <property type="match status" value="1"/>
</dbReference>
<name>HEM1_LISW6</name>
<sequence length="437" mass="49491">MFILTMGLNHHTAPIDIREKLVFKETEEEMALITLLQEKSILENVIISTCNRTEIVAVVDQIHTGRYYLKRFMANWFQMDMEKIEPYLFFHEEKEAVNHLYKVTAGLDSLVLGETQILGQVKHAFEIAKQTGTTGTLLNKLFREVVTFAKKVHHQTKINENAVSVSYAAVEVAKKLYGSLENKKIVLVGAGEMSELALQNLAGSGIADITIINRTKANAEILADQFQAKVGTYEEMNNYLSIADIVLVSTSADEPIIKQKDMQILMSQKSTSMLVIDIGLPRNVEHDCSYIPNFHLYDIDDLAGVVSANSLERQKIVLALENTIETEVQNFFEWEKQLGVVPVIRALREKALEMQEITMTSLENKLPGLTEREYIQIGKHMKSIINQMLKQPISELKEMSVENDAPTSIEHFKRIFGLTELDITLSEKTQEQAETRS</sequence>
<organism>
    <name type="scientific">Listeria welshimeri serovar 6b (strain ATCC 35897 / DSM 20650 / CCUG 15529 / CIP 8149 / NCTC 11857 / SLCC 5334 / V8)</name>
    <dbReference type="NCBI Taxonomy" id="386043"/>
    <lineage>
        <taxon>Bacteria</taxon>
        <taxon>Bacillati</taxon>
        <taxon>Bacillota</taxon>
        <taxon>Bacilli</taxon>
        <taxon>Bacillales</taxon>
        <taxon>Listeriaceae</taxon>
        <taxon>Listeria</taxon>
    </lineage>
</organism>
<protein>
    <recommendedName>
        <fullName evidence="1">Glutamyl-tRNA reductase</fullName>
        <shortName evidence="1">GluTR</shortName>
        <ecNumber evidence="1">1.2.1.70</ecNumber>
    </recommendedName>
</protein>
<proteinExistence type="inferred from homology"/>
<accession>A0AJ06</accession>
<feature type="chain" id="PRO_1000004632" description="Glutamyl-tRNA reductase">
    <location>
        <begin position="1"/>
        <end position="437"/>
    </location>
</feature>
<feature type="active site" description="Nucleophile" evidence="1">
    <location>
        <position position="50"/>
    </location>
</feature>
<feature type="binding site" evidence="1">
    <location>
        <begin position="49"/>
        <end position="52"/>
    </location>
    <ligand>
        <name>substrate</name>
    </ligand>
</feature>
<feature type="binding site" evidence="1">
    <location>
        <position position="109"/>
    </location>
    <ligand>
        <name>substrate</name>
    </ligand>
</feature>
<feature type="binding site" evidence="1">
    <location>
        <begin position="114"/>
        <end position="116"/>
    </location>
    <ligand>
        <name>substrate</name>
    </ligand>
</feature>
<feature type="binding site" evidence="1">
    <location>
        <position position="120"/>
    </location>
    <ligand>
        <name>substrate</name>
    </ligand>
</feature>
<feature type="binding site" evidence="1">
    <location>
        <begin position="189"/>
        <end position="194"/>
    </location>
    <ligand>
        <name>NADP(+)</name>
        <dbReference type="ChEBI" id="CHEBI:58349"/>
    </ligand>
</feature>
<feature type="site" description="Important for activity" evidence="1">
    <location>
        <position position="99"/>
    </location>
</feature>
<keyword id="KW-0521">NADP</keyword>
<keyword id="KW-0560">Oxidoreductase</keyword>
<keyword id="KW-0627">Porphyrin biosynthesis</keyword>
<gene>
    <name evidence="1" type="primary">hemA</name>
    <name type="ordered locus">lwe1570</name>
</gene>